<proteinExistence type="inferred from homology"/>
<feature type="chain" id="PRO_0000189440" description="2-C-methyl-D-erythritol 2,4-cyclodiphosphate synthase">
    <location>
        <begin position="1"/>
        <end position="159"/>
    </location>
</feature>
<feature type="binding site" evidence="1">
    <location>
        <begin position="9"/>
        <end position="11"/>
    </location>
    <ligand>
        <name>4-CDP-2-C-methyl-D-erythritol 2-phosphate</name>
        <dbReference type="ChEBI" id="CHEBI:57919"/>
    </ligand>
</feature>
<feature type="binding site" evidence="1">
    <location>
        <position position="9"/>
    </location>
    <ligand>
        <name>a divalent metal cation</name>
        <dbReference type="ChEBI" id="CHEBI:60240"/>
    </ligand>
</feature>
<feature type="binding site" evidence="1">
    <location>
        <position position="11"/>
    </location>
    <ligand>
        <name>a divalent metal cation</name>
        <dbReference type="ChEBI" id="CHEBI:60240"/>
    </ligand>
</feature>
<feature type="binding site" evidence="1">
    <location>
        <begin position="35"/>
        <end position="36"/>
    </location>
    <ligand>
        <name>4-CDP-2-C-methyl-D-erythritol 2-phosphate</name>
        <dbReference type="ChEBI" id="CHEBI:57919"/>
    </ligand>
</feature>
<feature type="binding site" evidence="1">
    <location>
        <position position="43"/>
    </location>
    <ligand>
        <name>a divalent metal cation</name>
        <dbReference type="ChEBI" id="CHEBI:60240"/>
    </ligand>
</feature>
<feature type="binding site" evidence="1">
    <location>
        <begin position="57"/>
        <end position="59"/>
    </location>
    <ligand>
        <name>4-CDP-2-C-methyl-D-erythritol 2-phosphate</name>
        <dbReference type="ChEBI" id="CHEBI:57919"/>
    </ligand>
</feature>
<feature type="binding site" evidence="1">
    <location>
        <begin position="62"/>
        <end position="66"/>
    </location>
    <ligand>
        <name>4-CDP-2-C-methyl-D-erythritol 2-phosphate</name>
        <dbReference type="ChEBI" id="CHEBI:57919"/>
    </ligand>
</feature>
<feature type="binding site" evidence="1">
    <location>
        <begin position="133"/>
        <end position="136"/>
    </location>
    <ligand>
        <name>4-CDP-2-C-methyl-D-erythritol 2-phosphate</name>
        <dbReference type="ChEBI" id="CHEBI:57919"/>
    </ligand>
</feature>
<feature type="binding site" evidence="1">
    <location>
        <position position="140"/>
    </location>
    <ligand>
        <name>4-CDP-2-C-methyl-D-erythritol 2-phosphate</name>
        <dbReference type="ChEBI" id="CHEBI:57919"/>
    </ligand>
</feature>
<feature type="binding site" evidence="1">
    <location>
        <position position="143"/>
    </location>
    <ligand>
        <name>4-CDP-2-C-methyl-D-erythritol 2-phosphate</name>
        <dbReference type="ChEBI" id="CHEBI:57919"/>
    </ligand>
</feature>
<feature type="site" description="Transition state stabilizer" evidence="1">
    <location>
        <position position="35"/>
    </location>
</feature>
<feature type="site" description="Transition state stabilizer" evidence="1">
    <location>
        <position position="134"/>
    </location>
</feature>
<dbReference type="EC" id="4.6.1.12" evidence="1"/>
<dbReference type="EMBL" id="AP006627">
    <property type="protein sequence ID" value="BAD62669.1"/>
    <property type="molecule type" value="Genomic_DNA"/>
</dbReference>
<dbReference type="RefSeq" id="WP_011244990.1">
    <property type="nucleotide sequence ID" value="NC_006582.1"/>
</dbReference>
<dbReference type="SMR" id="Q5WLT6"/>
<dbReference type="STRING" id="66692.ABC0126"/>
<dbReference type="KEGG" id="bcl:ABC0126"/>
<dbReference type="eggNOG" id="COG0245">
    <property type="taxonomic scope" value="Bacteria"/>
</dbReference>
<dbReference type="HOGENOM" id="CLU_084630_2_0_9"/>
<dbReference type="OrthoDB" id="9804336at2"/>
<dbReference type="UniPathway" id="UPA00056">
    <property type="reaction ID" value="UER00095"/>
</dbReference>
<dbReference type="Proteomes" id="UP000001168">
    <property type="component" value="Chromosome"/>
</dbReference>
<dbReference type="GO" id="GO:0008685">
    <property type="term" value="F:2-C-methyl-D-erythritol 2,4-cyclodiphosphate synthase activity"/>
    <property type="evidence" value="ECO:0007669"/>
    <property type="project" value="UniProtKB-UniRule"/>
</dbReference>
<dbReference type="GO" id="GO:0046872">
    <property type="term" value="F:metal ion binding"/>
    <property type="evidence" value="ECO:0007669"/>
    <property type="project" value="UniProtKB-KW"/>
</dbReference>
<dbReference type="GO" id="GO:0019288">
    <property type="term" value="P:isopentenyl diphosphate biosynthetic process, methylerythritol 4-phosphate pathway"/>
    <property type="evidence" value="ECO:0007669"/>
    <property type="project" value="UniProtKB-UniRule"/>
</dbReference>
<dbReference type="GO" id="GO:0016114">
    <property type="term" value="P:terpenoid biosynthetic process"/>
    <property type="evidence" value="ECO:0007669"/>
    <property type="project" value="InterPro"/>
</dbReference>
<dbReference type="CDD" id="cd00554">
    <property type="entry name" value="MECDP_synthase"/>
    <property type="match status" value="1"/>
</dbReference>
<dbReference type="FunFam" id="3.30.1330.50:FF:000001">
    <property type="entry name" value="2-C-methyl-D-erythritol 2,4-cyclodiphosphate synthase"/>
    <property type="match status" value="1"/>
</dbReference>
<dbReference type="Gene3D" id="3.30.1330.50">
    <property type="entry name" value="2-C-methyl-D-erythritol 2,4-cyclodiphosphate synthase"/>
    <property type="match status" value="1"/>
</dbReference>
<dbReference type="HAMAP" id="MF_00107">
    <property type="entry name" value="IspF"/>
    <property type="match status" value="1"/>
</dbReference>
<dbReference type="InterPro" id="IPR003526">
    <property type="entry name" value="MECDP_synthase"/>
</dbReference>
<dbReference type="InterPro" id="IPR020555">
    <property type="entry name" value="MECDP_synthase_CS"/>
</dbReference>
<dbReference type="InterPro" id="IPR036571">
    <property type="entry name" value="MECDP_synthase_sf"/>
</dbReference>
<dbReference type="NCBIfam" id="TIGR00151">
    <property type="entry name" value="ispF"/>
    <property type="match status" value="1"/>
</dbReference>
<dbReference type="PANTHER" id="PTHR43181">
    <property type="entry name" value="2-C-METHYL-D-ERYTHRITOL 2,4-CYCLODIPHOSPHATE SYNTHASE, CHLOROPLASTIC"/>
    <property type="match status" value="1"/>
</dbReference>
<dbReference type="PANTHER" id="PTHR43181:SF1">
    <property type="entry name" value="2-C-METHYL-D-ERYTHRITOL 2,4-CYCLODIPHOSPHATE SYNTHASE, CHLOROPLASTIC"/>
    <property type="match status" value="1"/>
</dbReference>
<dbReference type="Pfam" id="PF02542">
    <property type="entry name" value="YgbB"/>
    <property type="match status" value="1"/>
</dbReference>
<dbReference type="SUPFAM" id="SSF69765">
    <property type="entry name" value="IpsF-like"/>
    <property type="match status" value="1"/>
</dbReference>
<dbReference type="PROSITE" id="PS01350">
    <property type="entry name" value="ISPF"/>
    <property type="match status" value="1"/>
</dbReference>
<reference key="1">
    <citation type="submission" date="2003-10" db="EMBL/GenBank/DDBJ databases">
        <title>The complete genome sequence of the alkaliphilic Bacillus clausii KSM-K16.</title>
        <authorList>
            <person name="Takaki Y."/>
            <person name="Kageyama Y."/>
            <person name="Shimamura S."/>
            <person name="Suzuki H."/>
            <person name="Nishi S."/>
            <person name="Hatada Y."/>
            <person name="Kawai S."/>
            <person name="Ito S."/>
            <person name="Horikoshi K."/>
        </authorList>
    </citation>
    <scope>NUCLEOTIDE SEQUENCE [LARGE SCALE GENOMIC DNA]</scope>
    <source>
        <strain>KSM-K16</strain>
    </source>
</reference>
<protein>
    <recommendedName>
        <fullName evidence="1">2-C-methyl-D-erythritol 2,4-cyclodiphosphate synthase</fullName>
        <shortName evidence="1">MECDP-synthase</shortName>
        <shortName evidence="1">MECPP-synthase</shortName>
        <shortName evidence="1">MECPS</shortName>
        <ecNumber evidence="1">4.6.1.12</ecNumber>
    </recommendedName>
</protein>
<evidence type="ECO:0000255" key="1">
    <source>
        <dbReference type="HAMAP-Rule" id="MF_00107"/>
    </source>
</evidence>
<sequence length="159" mass="16956">MIRIGQGFDVHQLTEGRPLLLGGVHIPHPKGLLGHSDADVLLHTITDAALGAIGAGDLGKHFPDTDEAFKDADSKHLLSQAWQLVKNAGYTLGNVDCTVMAQKPKLAPYIEAMRKQIAELLETDVANVSVKATTTETLGFVGREEGIAAQAVILLQKAE</sequence>
<gene>
    <name evidence="1" type="primary">ispF</name>
    <name type="ordered locus">ABC0126</name>
</gene>
<keyword id="KW-0414">Isoprene biosynthesis</keyword>
<keyword id="KW-0456">Lyase</keyword>
<keyword id="KW-0479">Metal-binding</keyword>
<keyword id="KW-1185">Reference proteome</keyword>
<name>ISPF_SHOC1</name>
<comment type="function">
    <text evidence="1">Involved in the biosynthesis of isopentenyl diphosphate (IPP) and dimethylallyl diphosphate (DMAPP), two major building blocks of isoprenoid compounds. Catalyzes the conversion of 4-diphosphocytidyl-2-C-methyl-D-erythritol 2-phosphate (CDP-ME2P) to 2-C-methyl-D-erythritol 2,4-cyclodiphosphate (ME-CPP) with a corresponding release of cytidine 5-monophosphate (CMP).</text>
</comment>
<comment type="catalytic activity">
    <reaction evidence="1">
        <text>4-CDP-2-C-methyl-D-erythritol 2-phosphate = 2-C-methyl-D-erythritol 2,4-cyclic diphosphate + CMP</text>
        <dbReference type="Rhea" id="RHEA:23864"/>
        <dbReference type="ChEBI" id="CHEBI:57919"/>
        <dbReference type="ChEBI" id="CHEBI:58483"/>
        <dbReference type="ChEBI" id="CHEBI:60377"/>
        <dbReference type="EC" id="4.6.1.12"/>
    </reaction>
</comment>
<comment type="cofactor">
    <cofactor evidence="1">
        <name>a divalent metal cation</name>
        <dbReference type="ChEBI" id="CHEBI:60240"/>
    </cofactor>
    <text evidence="1">Binds 1 divalent metal cation per subunit.</text>
</comment>
<comment type="pathway">
    <text evidence="1">Isoprenoid biosynthesis; isopentenyl diphosphate biosynthesis via DXP pathway; isopentenyl diphosphate from 1-deoxy-D-xylulose 5-phosphate: step 4/6.</text>
</comment>
<comment type="subunit">
    <text evidence="1">Homotrimer.</text>
</comment>
<comment type="similarity">
    <text evidence="1">Belongs to the IspF family.</text>
</comment>
<accession>Q5WLT6</accession>
<organism>
    <name type="scientific">Shouchella clausii (strain KSM-K16)</name>
    <name type="common">Alkalihalobacillus clausii</name>
    <dbReference type="NCBI Taxonomy" id="66692"/>
    <lineage>
        <taxon>Bacteria</taxon>
        <taxon>Bacillati</taxon>
        <taxon>Bacillota</taxon>
        <taxon>Bacilli</taxon>
        <taxon>Bacillales</taxon>
        <taxon>Bacillaceae</taxon>
        <taxon>Shouchella</taxon>
    </lineage>
</organism>